<reference key="1">
    <citation type="journal article" date="1999" name="Nature">
        <title>Sequence and analysis of chromosome 2 of the plant Arabidopsis thaliana.</title>
        <authorList>
            <person name="Lin X."/>
            <person name="Kaul S."/>
            <person name="Rounsley S.D."/>
            <person name="Shea T.P."/>
            <person name="Benito M.-I."/>
            <person name="Town C.D."/>
            <person name="Fujii C.Y."/>
            <person name="Mason T.M."/>
            <person name="Bowman C.L."/>
            <person name="Barnstead M.E."/>
            <person name="Feldblyum T.V."/>
            <person name="Buell C.R."/>
            <person name="Ketchum K.A."/>
            <person name="Lee J.J."/>
            <person name="Ronning C.M."/>
            <person name="Koo H.L."/>
            <person name="Moffat K.S."/>
            <person name="Cronin L.A."/>
            <person name="Shen M."/>
            <person name="Pai G."/>
            <person name="Van Aken S."/>
            <person name="Umayam L."/>
            <person name="Tallon L.J."/>
            <person name="Gill J.E."/>
            <person name="Adams M.D."/>
            <person name="Carrera A.J."/>
            <person name="Creasy T.H."/>
            <person name="Goodman H.M."/>
            <person name="Somerville C.R."/>
            <person name="Copenhaver G.P."/>
            <person name="Preuss D."/>
            <person name="Nierman W.C."/>
            <person name="White O."/>
            <person name="Eisen J.A."/>
            <person name="Salzberg S.L."/>
            <person name="Fraser C.M."/>
            <person name="Venter J.C."/>
        </authorList>
    </citation>
    <scope>NUCLEOTIDE SEQUENCE [LARGE SCALE GENOMIC DNA]</scope>
    <source>
        <strain>cv. Columbia</strain>
    </source>
</reference>
<reference key="2">
    <citation type="journal article" date="2017" name="Plant J.">
        <title>Araport11: a complete reannotation of the Arabidopsis thaliana reference genome.</title>
        <authorList>
            <person name="Cheng C.Y."/>
            <person name="Krishnakumar V."/>
            <person name="Chan A.P."/>
            <person name="Thibaud-Nissen F."/>
            <person name="Schobel S."/>
            <person name="Town C.D."/>
        </authorList>
    </citation>
    <scope>GENOME REANNOTATION</scope>
    <source>
        <strain>cv. Columbia</strain>
    </source>
</reference>
<reference key="3">
    <citation type="journal article" date="2003" name="Science">
        <title>Empirical analysis of transcriptional activity in the Arabidopsis genome.</title>
        <authorList>
            <person name="Yamada K."/>
            <person name="Lim J."/>
            <person name="Dale J.M."/>
            <person name="Chen H."/>
            <person name="Shinn P."/>
            <person name="Palm C.J."/>
            <person name="Southwick A.M."/>
            <person name="Wu H.C."/>
            <person name="Kim C.J."/>
            <person name="Nguyen M."/>
            <person name="Pham P.K."/>
            <person name="Cheuk R.F."/>
            <person name="Karlin-Newmann G."/>
            <person name="Liu S.X."/>
            <person name="Lam B."/>
            <person name="Sakano H."/>
            <person name="Wu T."/>
            <person name="Yu G."/>
            <person name="Miranda M."/>
            <person name="Quach H.L."/>
            <person name="Tripp M."/>
            <person name="Chang C.H."/>
            <person name="Lee J.M."/>
            <person name="Toriumi M.J."/>
            <person name="Chan M.M."/>
            <person name="Tang C.C."/>
            <person name="Onodera C.S."/>
            <person name="Deng J.M."/>
            <person name="Akiyama K."/>
            <person name="Ansari Y."/>
            <person name="Arakawa T."/>
            <person name="Banh J."/>
            <person name="Banno F."/>
            <person name="Bowser L."/>
            <person name="Brooks S.Y."/>
            <person name="Carninci P."/>
            <person name="Chao Q."/>
            <person name="Choy N."/>
            <person name="Enju A."/>
            <person name="Goldsmith A.D."/>
            <person name="Gurjal M."/>
            <person name="Hansen N.F."/>
            <person name="Hayashizaki Y."/>
            <person name="Johnson-Hopson C."/>
            <person name="Hsuan V.W."/>
            <person name="Iida K."/>
            <person name="Karnes M."/>
            <person name="Khan S."/>
            <person name="Koesema E."/>
            <person name="Ishida J."/>
            <person name="Jiang P.X."/>
            <person name="Jones T."/>
            <person name="Kawai J."/>
            <person name="Kamiya A."/>
            <person name="Meyers C."/>
            <person name="Nakajima M."/>
            <person name="Narusaka M."/>
            <person name="Seki M."/>
            <person name="Sakurai T."/>
            <person name="Satou M."/>
            <person name="Tamse R."/>
            <person name="Vaysberg M."/>
            <person name="Wallender E.K."/>
            <person name="Wong C."/>
            <person name="Yamamura Y."/>
            <person name="Yuan S."/>
            <person name="Shinozaki K."/>
            <person name="Davis R.W."/>
            <person name="Theologis A."/>
            <person name="Ecker J.R."/>
        </authorList>
    </citation>
    <scope>NUCLEOTIDE SEQUENCE [LARGE SCALE MRNA]</scope>
    <source>
        <strain>cv. Columbia</strain>
    </source>
</reference>
<reference key="4">
    <citation type="journal article" date="2004" name="Plant Cell Physiol.">
        <title>A novel Arabidopsis thaliana protein is a functional peripheral-type benzodiazepine receptor.</title>
        <authorList>
            <person name="Lindemann P."/>
            <person name="Koch A."/>
            <person name="Degenhardt B."/>
            <person name="Hause G."/>
            <person name="Grimm B."/>
            <person name="Papadopoulos V."/>
        </authorList>
    </citation>
    <scope>FUNCTION</scope>
</reference>
<reference key="5">
    <citation type="journal article" date="2009" name="Plant J.">
        <title>The Arabidopsis TSPO-related protein is a stress and abscisic acid-regulated, endoplasmic reticulum-Golgi-localized membrane protein.</title>
        <authorList>
            <person name="Guillaumot D."/>
            <person name="Guillon S."/>
            <person name="Deplanque T."/>
            <person name="Vanhee C."/>
            <person name="Gumy C."/>
            <person name="Masquelier D."/>
            <person name="Morsomme P."/>
            <person name="Batoko H."/>
        </authorList>
    </citation>
    <scope>FUNCTION</scope>
    <scope>TISSUE SPECIFICITY</scope>
    <scope>INDUCTION</scope>
    <scope>DISRUPTION PHENOTYPE</scope>
</reference>
<reference key="6">
    <citation type="journal article" date="2009" name="Plant Signal. Behav.">
        <title>ABA, porphyrins and plant TSPO-related protein.</title>
        <authorList>
            <person name="Guillaumot D."/>
            <person name="Guillon S."/>
            <person name="Morsomme P."/>
            <person name="Batoko H."/>
        </authorList>
    </citation>
    <scope>FUNCTION</scope>
</reference>
<reference key="7">
    <citation type="journal article" date="2011" name="BMC Plant Biol.">
        <title>The Arabidopsis translocator protein (AtTSPO) is regulated at multiple levels in response to salt stress and perturbations in tetrapyrrole metabolism.</title>
        <authorList>
            <person name="Balsemao-Pires E."/>
            <person name="Jaillais Y."/>
            <person name="Olson B.J."/>
            <person name="Andrade L.R."/>
            <person name="Umen J.G."/>
            <person name="Chory J."/>
            <person name="Sachetto-Martins G."/>
        </authorList>
    </citation>
    <scope>FUNCTION</scope>
    <scope>SUBCELLULAR LOCATION</scope>
    <scope>INDUCTION</scope>
</reference>
<reference key="8">
    <citation type="journal article" date="2011" name="J. Exp. Bot.">
        <title>A TSPO-related protein localizes to the early secretory pathway in Arabidopsis, but is targeted to mitochondria when expressed in yeast.</title>
        <authorList>
            <person name="Vanhee C."/>
            <person name="Guillon S."/>
            <person name="Masquelier D."/>
            <person name="Degand H."/>
            <person name="Deleu M."/>
            <person name="Morsomme P."/>
            <person name="Batoko H."/>
        </authorList>
    </citation>
    <scope>SUBCELLULAR LOCATION</scope>
</reference>
<reference key="9">
    <citation type="journal article" date="2011" name="Plant Cell">
        <title>The Arabidopsis multistress regulator TSPO is a heme binding membrane protein and a potential scavenger of porphyrins via an autophagy-dependent degradation mechanism.</title>
        <authorList>
            <person name="Vanhee C."/>
            <person name="Zapotoczny G."/>
            <person name="Masquelier D."/>
            <person name="Ghislain M."/>
            <person name="Batoko H."/>
        </authorList>
    </citation>
    <scope>FUNCTION</scope>
    <scope>SUBCELLULAR LOCATION</scope>
    <scope>MUTAGENESIS OF HIS-91 AND HIS-115</scope>
</reference>
<keyword id="KW-0150">Chloroplast</keyword>
<keyword id="KW-0256">Endoplasmic reticulum</keyword>
<keyword id="KW-0333">Golgi apparatus</keyword>
<keyword id="KW-0472">Membrane</keyword>
<keyword id="KW-0934">Plastid</keyword>
<keyword id="KW-1185">Reference proteome</keyword>
<keyword id="KW-0346">Stress response</keyword>
<keyword id="KW-0812">Transmembrane</keyword>
<keyword id="KW-1133">Transmembrane helix</keyword>
<keyword id="KW-0813">Transport</keyword>
<accession>O82245</accession>
<proteinExistence type="evidence at protein level"/>
<protein>
    <recommendedName>
        <fullName>Translocator protein homolog</fullName>
        <shortName>AtTSPO</shortName>
    </recommendedName>
</protein>
<name>TSPO_ARATH</name>
<evidence type="ECO:0000250" key="1"/>
<evidence type="ECO:0000256" key="2">
    <source>
        <dbReference type="SAM" id="MobiDB-lite"/>
    </source>
</evidence>
<evidence type="ECO:0000269" key="3">
    <source>
    </source>
</evidence>
<evidence type="ECO:0000269" key="4">
    <source>
    </source>
</evidence>
<evidence type="ECO:0000269" key="5">
    <source>
    </source>
</evidence>
<evidence type="ECO:0000269" key="6">
    <source>
    </source>
</evidence>
<evidence type="ECO:0000269" key="7">
    <source>
    </source>
</evidence>
<evidence type="ECO:0000305" key="8"/>
<gene>
    <name type="primary">TSPO</name>
    <name type="ordered locus">At2g47770</name>
    <name type="ORF">F17A22.16</name>
</gene>
<feature type="chain" id="PRO_0000415610" description="Translocator protein homolog">
    <location>
        <begin position="1"/>
        <end position="196"/>
    </location>
</feature>
<feature type="transmembrane region" description="Helical; Name=1" evidence="1">
    <location>
        <begin position="47"/>
        <end position="69"/>
    </location>
</feature>
<feature type="transmembrane region" description="Helical; Name=2" evidence="1">
    <location>
        <begin position="88"/>
        <end position="108"/>
    </location>
</feature>
<feature type="transmembrane region" description="Helical; Name=3" evidence="1">
    <location>
        <begin position="120"/>
        <end position="139"/>
    </location>
</feature>
<feature type="transmembrane region" description="Helical; Name=4" evidence="1">
    <location>
        <begin position="142"/>
        <end position="165"/>
    </location>
</feature>
<feature type="transmembrane region" description="Helical; Name=5" evidence="1">
    <location>
        <begin position="174"/>
        <end position="196"/>
    </location>
</feature>
<feature type="region of interest" description="Disordered" evidence="2">
    <location>
        <begin position="1"/>
        <end position="40"/>
    </location>
</feature>
<feature type="compositionally biased region" description="Basic and acidic residues" evidence="2">
    <location>
        <begin position="1"/>
        <end position="16"/>
    </location>
</feature>
<feature type="compositionally biased region" description="Basic and acidic residues" evidence="2">
    <location>
        <begin position="23"/>
        <end position="35"/>
    </location>
</feature>
<feature type="mutagenesis site" description="Unable to bind heme." evidence="6">
    <original>H</original>
    <variation>A</variation>
    <location>
        <position position="91"/>
    </location>
</feature>
<feature type="mutagenesis site" description="No effect on the ability to bind heme." evidence="6">
    <original>H</original>
    <variation>A</variation>
    <location>
        <position position="115"/>
    </location>
</feature>
<comment type="function">
    <text evidence="3 4 5 6 7">Stress-induced membrane protein that can bind heme and may play a role in the transport of tetrapyrrole intermediates during salt stress and contribute to the detoxification of highly reactive porphyrins in the cytoplasm.</text>
</comment>
<comment type="subcellular location">
    <subcellularLocation>
        <location>Endoplasmic reticulum membrane</location>
        <topology>Multi-pass membrane protein</topology>
    </subcellularLocation>
    <subcellularLocation>
        <location>Golgi apparatus membrane</location>
        <topology>Multi-pass membrane protein</topology>
    </subcellularLocation>
    <subcellularLocation>
        <location>Plastid</location>
        <location>Chloroplast membrane</location>
        <topology>Multi-pass membrane protein</topology>
    </subcellularLocation>
    <text>Localizes in chloroplast upon salt stress.</text>
</comment>
<comment type="tissue specificity">
    <text evidence="4">Specifically expressed in seeds (at protein level).</text>
</comment>
<comment type="induction">
    <text evidence="4 7">By abscisic acid (ABA) and osmotic and salt stresses (at protein level). Induced by methyl viologen.</text>
</comment>
<comment type="disruption phenotype">
    <text evidence="4">No visible phenotype under normal growth conditions.</text>
</comment>
<comment type="miscellaneous">
    <text>Plants overexpressing TSPO show increased sensitivity to ABA and salt stress. Cultured cells overexpressing TSPO have reduced greening and chlorophyll a content under light-growing conditions.</text>
</comment>
<comment type="similarity">
    <text evidence="8">Belongs to the TspO/BZRP family.</text>
</comment>
<sequence>MDSQDIRYRGGDDRDAATTAMAETERKSADDNKGKRDQKRAMAKRGLKSLTVAVAAPVLVTLFATYFLGTSDGYGNRAKSSSWIPPLWLLHTTCLASSGLMGLAAWLVWVDGGFHKKPNALYLYLAQFLLCLVWDPVTFRVGSGVAGLAVWLGQSAALFGCYKAFNEISPVAGNLVKPCLAWAAFVAAVNVKLAVA</sequence>
<dbReference type="EMBL" id="AC005309">
    <property type="protein sequence ID" value="AAC63632.1"/>
    <property type="molecule type" value="Genomic_DNA"/>
</dbReference>
<dbReference type="EMBL" id="CP002685">
    <property type="protein sequence ID" value="AEC10886.1"/>
    <property type="molecule type" value="Genomic_DNA"/>
</dbReference>
<dbReference type="EMBL" id="AF428356">
    <property type="protein sequence ID" value="AAL16286.1"/>
    <property type="molecule type" value="mRNA"/>
</dbReference>
<dbReference type="EMBL" id="AY045981">
    <property type="protein sequence ID" value="AAK76655.1"/>
    <property type="molecule type" value="mRNA"/>
</dbReference>
<dbReference type="EMBL" id="AY079391">
    <property type="protein sequence ID" value="AAL85122.1"/>
    <property type="molecule type" value="mRNA"/>
</dbReference>
<dbReference type="PIR" id="C84919">
    <property type="entry name" value="C84919"/>
</dbReference>
<dbReference type="RefSeq" id="NP_566110.1">
    <property type="nucleotide sequence ID" value="NM_130344.2"/>
</dbReference>
<dbReference type="SMR" id="O82245"/>
<dbReference type="BioGRID" id="4724">
    <property type="interactions" value="13"/>
</dbReference>
<dbReference type="FunCoup" id="O82245">
    <property type="interactions" value="82"/>
</dbReference>
<dbReference type="IntAct" id="O82245">
    <property type="interactions" value="5"/>
</dbReference>
<dbReference type="STRING" id="3702.O82245"/>
<dbReference type="TCDB" id="9.A.24.1.3">
    <property type="family name" value="the mitochondrial cholesterol/porphyrin/5-aminolevulinic acid uptake translocator protein (tspo) family"/>
</dbReference>
<dbReference type="PaxDb" id="3702-AT2G47770.1"/>
<dbReference type="ProteomicsDB" id="232401"/>
<dbReference type="EnsemblPlants" id="AT2G47770.1">
    <property type="protein sequence ID" value="AT2G47770.1"/>
    <property type="gene ID" value="AT2G47770"/>
</dbReference>
<dbReference type="GeneID" id="819389"/>
<dbReference type="Gramene" id="AT2G47770.1">
    <property type="protein sequence ID" value="AT2G47770.1"/>
    <property type="gene ID" value="AT2G47770"/>
</dbReference>
<dbReference type="KEGG" id="ath:AT2G47770"/>
<dbReference type="Araport" id="AT2G47770"/>
<dbReference type="TAIR" id="AT2G47770">
    <property type="gene designation" value="TSPO"/>
</dbReference>
<dbReference type="eggNOG" id="ENOG502RZ33">
    <property type="taxonomic scope" value="Eukaryota"/>
</dbReference>
<dbReference type="HOGENOM" id="CLU_120171_0_0_1"/>
<dbReference type="InParanoid" id="O82245"/>
<dbReference type="OMA" id="WVEGGFH"/>
<dbReference type="OrthoDB" id="8841220at2759"/>
<dbReference type="PhylomeDB" id="O82245"/>
<dbReference type="PRO" id="PR:O82245"/>
<dbReference type="Proteomes" id="UP000006548">
    <property type="component" value="Chromosome 2"/>
</dbReference>
<dbReference type="ExpressionAtlas" id="O82245">
    <property type="expression patterns" value="baseline and differential"/>
</dbReference>
<dbReference type="GO" id="GO:0031969">
    <property type="term" value="C:chloroplast membrane"/>
    <property type="evidence" value="ECO:0007669"/>
    <property type="project" value="UniProtKB-SubCell"/>
</dbReference>
<dbReference type="GO" id="GO:0005783">
    <property type="term" value="C:endoplasmic reticulum"/>
    <property type="evidence" value="ECO:0000314"/>
    <property type="project" value="TAIR"/>
</dbReference>
<dbReference type="GO" id="GO:0005789">
    <property type="term" value="C:endoplasmic reticulum membrane"/>
    <property type="evidence" value="ECO:0007669"/>
    <property type="project" value="UniProtKB-SubCell"/>
</dbReference>
<dbReference type="GO" id="GO:0005794">
    <property type="term" value="C:Golgi apparatus"/>
    <property type="evidence" value="ECO:0000314"/>
    <property type="project" value="TAIR"/>
</dbReference>
<dbReference type="GO" id="GO:0000139">
    <property type="term" value="C:Golgi membrane"/>
    <property type="evidence" value="ECO:0007669"/>
    <property type="project" value="UniProtKB-SubCell"/>
</dbReference>
<dbReference type="GO" id="GO:0005795">
    <property type="term" value="C:Golgi stack"/>
    <property type="evidence" value="ECO:0000314"/>
    <property type="project" value="TAIR"/>
</dbReference>
<dbReference type="GO" id="GO:0016020">
    <property type="term" value="C:membrane"/>
    <property type="evidence" value="ECO:0000314"/>
    <property type="project" value="TAIR"/>
</dbReference>
<dbReference type="GO" id="GO:0020037">
    <property type="term" value="F:heme binding"/>
    <property type="evidence" value="ECO:0000314"/>
    <property type="project" value="TAIR"/>
</dbReference>
<dbReference type="GO" id="GO:0006778">
    <property type="term" value="P:porphyrin-containing compound metabolic process"/>
    <property type="evidence" value="ECO:0000315"/>
    <property type="project" value="TAIR"/>
</dbReference>
<dbReference type="GO" id="GO:0009737">
    <property type="term" value="P:response to abscisic acid"/>
    <property type="evidence" value="ECO:0000270"/>
    <property type="project" value="TAIR"/>
</dbReference>
<dbReference type="GO" id="GO:0006970">
    <property type="term" value="P:response to osmotic stress"/>
    <property type="evidence" value="ECO:0000270"/>
    <property type="project" value="TAIR"/>
</dbReference>
<dbReference type="GO" id="GO:0009651">
    <property type="term" value="P:response to salt stress"/>
    <property type="evidence" value="ECO:0000270"/>
    <property type="project" value="TAIR"/>
</dbReference>
<dbReference type="CDD" id="cd15904">
    <property type="entry name" value="TSPO_MBR"/>
    <property type="match status" value="1"/>
</dbReference>
<dbReference type="FunFam" id="1.20.1260.100:FF:000001">
    <property type="entry name" value="translocator protein 2"/>
    <property type="match status" value="1"/>
</dbReference>
<dbReference type="Gene3D" id="1.20.1260.100">
    <property type="entry name" value="TspO/MBR protein"/>
    <property type="match status" value="1"/>
</dbReference>
<dbReference type="InterPro" id="IPR038330">
    <property type="entry name" value="TspO/MBR-related_sf"/>
</dbReference>
<dbReference type="InterPro" id="IPR004307">
    <property type="entry name" value="TspO_MBR"/>
</dbReference>
<dbReference type="PANTHER" id="PTHR10057">
    <property type="entry name" value="PERIPHERAL-TYPE BENZODIAZEPINE RECEPTOR"/>
    <property type="match status" value="1"/>
</dbReference>
<dbReference type="PANTHER" id="PTHR10057:SF0">
    <property type="entry name" value="TRANSLOCATOR PROTEIN"/>
    <property type="match status" value="1"/>
</dbReference>
<dbReference type="Pfam" id="PF03073">
    <property type="entry name" value="TspO_MBR"/>
    <property type="match status" value="1"/>
</dbReference>
<organism>
    <name type="scientific">Arabidopsis thaliana</name>
    <name type="common">Mouse-ear cress</name>
    <dbReference type="NCBI Taxonomy" id="3702"/>
    <lineage>
        <taxon>Eukaryota</taxon>
        <taxon>Viridiplantae</taxon>
        <taxon>Streptophyta</taxon>
        <taxon>Embryophyta</taxon>
        <taxon>Tracheophyta</taxon>
        <taxon>Spermatophyta</taxon>
        <taxon>Magnoliopsida</taxon>
        <taxon>eudicotyledons</taxon>
        <taxon>Gunneridae</taxon>
        <taxon>Pentapetalae</taxon>
        <taxon>rosids</taxon>
        <taxon>malvids</taxon>
        <taxon>Brassicales</taxon>
        <taxon>Brassicaceae</taxon>
        <taxon>Camelineae</taxon>
        <taxon>Arabidopsis</taxon>
    </lineage>
</organism>